<proteinExistence type="evidence at transcript level"/>
<feature type="chain" id="PRO_0000454613" description="Acyl-CoA transferase FVEG_12629">
    <location>
        <begin position="1"/>
        <end position="569"/>
    </location>
</feature>
<gene>
    <name type="ORF">FVEG_12629</name>
</gene>
<protein>
    <recommendedName>
        <fullName evidence="5">Acyl-CoA transferase FVEG_12629</fullName>
        <ecNumber evidence="7">2.8.3.-</ecNumber>
    </recommendedName>
    <alternativeName>
        <fullName evidence="5">Fusarium detoxification of benzoxazolinone cluster 2 protein FVEG_12629</fullName>
        <shortName evidence="5">FDB2 cluster protein FVEG_12629</shortName>
    </alternativeName>
</protein>
<reference key="1">
    <citation type="journal article" date="2010" name="Nature">
        <title>Comparative genomics reveals mobile pathogenicity chromosomes in Fusarium.</title>
        <authorList>
            <person name="Ma L.-J."/>
            <person name="van der Does H.C."/>
            <person name="Borkovich K.A."/>
            <person name="Coleman J.J."/>
            <person name="Daboussi M.-J."/>
            <person name="Di Pietro A."/>
            <person name="Dufresne M."/>
            <person name="Freitag M."/>
            <person name="Grabherr M."/>
            <person name="Henrissat B."/>
            <person name="Houterman P.M."/>
            <person name="Kang S."/>
            <person name="Shim W.-B."/>
            <person name="Woloshuk C."/>
            <person name="Xie X."/>
            <person name="Xu J.-R."/>
            <person name="Antoniw J."/>
            <person name="Baker S.E."/>
            <person name="Bluhm B.H."/>
            <person name="Breakspear A."/>
            <person name="Brown D.W."/>
            <person name="Butchko R.A.E."/>
            <person name="Chapman S."/>
            <person name="Coulson R."/>
            <person name="Coutinho P.M."/>
            <person name="Danchin E.G.J."/>
            <person name="Diener A."/>
            <person name="Gale L.R."/>
            <person name="Gardiner D.M."/>
            <person name="Goff S."/>
            <person name="Hammond-Kosack K.E."/>
            <person name="Hilburn K."/>
            <person name="Hua-Van A."/>
            <person name="Jonkers W."/>
            <person name="Kazan K."/>
            <person name="Kodira C.D."/>
            <person name="Koehrsen M."/>
            <person name="Kumar L."/>
            <person name="Lee Y.-H."/>
            <person name="Li L."/>
            <person name="Manners J.M."/>
            <person name="Miranda-Saavedra D."/>
            <person name="Mukherjee M."/>
            <person name="Park G."/>
            <person name="Park J."/>
            <person name="Park S.-Y."/>
            <person name="Proctor R.H."/>
            <person name="Regev A."/>
            <person name="Ruiz-Roldan M.C."/>
            <person name="Sain D."/>
            <person name="Sakthikumar S."/>
            <person name="Sykes S."/>
            <person name="Schwartz D.C."/>
            <person name="Turgeon B.G."/>
            <person name="Wapinski I."/>
            <person name="Yoder O."/>
            <person name="Young S."/>
            <person name="Zeng Q."/>
            <person name="Zhou S."/>
            <person name="Galagan J."/>
            <person name="Cuomo C.A."/>
            <person name="Kistler H.C."/>
            <person name="Rep M."/>
        </authorList>
    </citation>
    <scope>NUCLEOTIDE SEQUENCE [LARGE SCALE GENOMIC DNA]</scope>
    <source>
        <strain>M3125 / FGSC 7600</strain>
    </source>
</reference>
<reference key="2">
    <citation type="journal article" date="2002" name="Mol. Plant Microbe Interact.">
        <title>Fdb1 and Fdb2, Fusarium verticillioides loci necessary for detoxification of preformed antimicrobials from corn.</title>
        <authorList>
            <person name="Glenn A.E."/>
            <person name="Gold S.E."/>
            <person name="Bacon C.W."/>
        </authorList>
    </citation>
    <scope>FUNCTION</scope>
</reference>
<reference key="3">
    <citation type="journal article" date="2003" name="Appl. Environ. Microbiol.">
        <title>Identification of intermediate and branch metabolites resulting from biotransformation of 2-benzoxazolinone by Fusarium verticillioides.</title>
        <authorList>
            <person name="Glenn A.E."/>
            <person name="Meredith F.I."/>
            <person name="Morrison W.H. III"/>
            <person name="Bacon C.W."/>
        </authorList>
    </citation>
    <scope>FUNCTION</scope>
</reference>
<reference key="4">
    <citation type="journal article" date="2009" name="J. Appl. Microbiol.">
        <title>FDB2 encodes a member of the arylamine N-acetyltransferase family and is necessary for biotransformation of benzoxazolinones by Fusarium verticillioides.</title>
        <authorList>
            <person name="Glenn A.E."/>
            <person name="Bacon C.W."/>
        </authorList>
    </citation>
    <scope>FUNCTION</scope>
    <scope>DISRUPTION PHENOTYPE</scope>
</reference>
<reference key="5">
    <citation type="journal article" date="2016" name="PLoS ONE">
        <title>Two horizontally transferred xenobiotic resistance gene clusters associated with detoxification of benzoxazolinones by Fusarium species.</title>
        <authorList>
            <person name="Glenn A.E."/>
            <person name="Davis C.B."/>
            <person name="Gao M."/>
            <person name="Gold S.E."/>
            <person name="Mitchell T.R."/>
            <person name="Proctor R.H."/>
            <person name="Stewart J.E."/>
            <person name="Snook M.E."/>
        </authorList>
    </citation>
    <scope>FUNCTION</scope>
    <scope>INDUCTION</scope>
</reference>
<evidence type="ECO:0000269" key="1">
    <source>
    </source>
</evidence>
<evidence type="ECO:0000269" key="2">
    <source>
    </source>
</evidence>
<evidence type="ECO:0000269" key="3">
    <source>
    </source>
</evidence>
<evidence type="ECO:0000269" key="4">
    <source>
    </source>
</evidence>
<evidence type="ECO:0000303" key="5">
    <source>
    </source>
</evidence>
<evidence type="ECO:0000305" key="6"/>
<evidence type="ECO:0000305" key="7">
    <source>
    </source>
</evidence>
<evidence type="ECO:0000305" key="8">
    <source>
    </source>
</evidence>
<name>FDB29_GIBM7</name>
<sequence>MTTKTSNETYGAGTVVDSEFSPLPAECERILRIFAARTPGFTKDEALLSGVNFHGDDLPCIPGPIKSQAVTAVLHAMVGIVGLEILHLRGVTTDNQIDIDVNHAGLYPATAALVDIDGVTGPEVIKLPTVPQWDKDRASNSPLVYRATAIYETADSGVWFQLHGSLDSWKVLALLGIGKDLDSEIRTNDAAYELIQERVRKYRAREIEQLVVEKGLSGSIVYSPEEWRQTEMGRSLSRHPLVNYKQKSHCATLAPASFPVLEDKRPLAGIKVVELTRIIAGAAAGAALASLGAEVIRVNSSKLKDYTPAQPSSLMAGKKTIDLDLEDPADHKKLMQLFEQADVILQGYRLGSLARRGFGLEAALELANKRGRGVVYVDENCYGPDGYYAERPGWQQVADAAAGSSYVMGQSFGFPKGQGVLPSLPISDMSTGILTALTIMCGIRDRAKFGGSYHGHASLTAYNMATLDSEVRLYQREVVQKISDKYEFPTWSSDVHVAPLYYSILDAWGKKSELIKDEKHYIHFSDSVFGSDLRVLGPVVRYDKEEYSPKWNSPPVPFCHHEFTMFSNQ</sequence>
<organism>
    <name type="scientific">Gibberella moniliformis (strain M3125 / FGSC 7600)</name>
    <name type="common">Maize ear and stalk rot fungus</name>
    <name type="synonym">Fusarium verticillioides</name>
    <dbReference type="NCBI Taxonomy" id="334819"/>
    <lineage>
        <taxon>Eukaryota</taxon>
        <taxon>Fungi</taxon>
        <taxon>Dikarya</taxon>
        <taxon>Ascomycota</taxon>
        <taxon>Pezizomycotina</taxon>
        <taxon>Sordariomycetes</taxon>
        <taxon>Hypocreomycetidae</taxon>
        <taxon>Hypocreales</taxon>
        <taxon>Nectriaceae</taxon>
        <taxon>Fusarium</taxon>
        <taxon>Fusarium fujikuroi species complex</taxon>
    </lineage>
</organism>
<dbReference type="EC" id="2.8.3.-" evidence="7"/>
<dbReference type="EMBL" id="CM000580">
    <property type="protein sequence ID" value="EWG54409.1"/>
    <property type="molecule type" value="Genomic_DNA"/>
</dbReference>
<dbReference type="RefSeq" id="XP_018760600.1">
    <property type="nucleotide sequence ID" value="XM_018901979.1"/>
</dbReference>
<dbReference type="SMR" id="W7N463"/>
<dbReference type="STRING" id="334819.W7N463"/>
<dbReference type="EnsemblFungi" id="FVEG_12629T0">
    <property type="protein sequence ID" value="FVEG_12629T0"/>
    <property type="gene ID" value="FVEG_12629"/>
</dbReference>
<dbReference type="GeneID" id="30070059"/>
<dbReference type="KEGG" id="fvr:FVEG_12629"/>
<dbReference type="VEuPathDB" id="FungiDB:FVEG_12629"/>
<dbReference type="eggNOG" id="KOG3957">
    <property type="taxonomic scope" value="Eukaryota"/>
</dbReference>
<dbReference type="HOGENOM" id="CLU_021588_1_1_1"/>
<dbReference type="OMA" id="IMCGIRD"/>
<dbReference type="OrthoDB" id="93213at110618"/>
<dbReference type="Proteomes" id="UP000009096">
    <property type="component" value="Chromosome 3"/>
</dbReference>
<dbReference type="GO" id="GO:0016746">
    <property type="term" value="F:acyltransferase activity"/>
    <property type="evidence" value="ECO:0007669"/>
    <property type="project" value="UniProtKB-KW"/>
</dbReference>
<dbReference type="Gene3D" id="3.40.50.10540">
    <property type="entry name" value="Crotonobetainyl-coa:carnitine coa-transferase, domain 1"/>
    <property type="match status" value="1"/>
</dbReference>
<dbReference type="InterPro" id="IPR052985">
    <property type="entry name" value="CoA-trans_III_biosynth/detox"/>
</dbReference>
<dbReference type="InterPro" id="IPR003673">
    <property type="entry name" value="CoA-Trfase_fam_III"/>
</dbReference>
<dbReference type="InterPro" id="IPR023606">
    <property type="entry name" value="CoA-Trfase_III_dom_1_sf"/>
</dbReference>
<dbReference type="PANTHER" id="PTHR48229:SF1">
    <property type="entry name" value="ALPHA METHYLACYL-COA RACEMASE-RELATED"/>
    <property type="match status" value="1"/>
</dbReference>
<dbReference type="PANTHER" id="PTHR48229">
    <property type="entry name" value="CAIB/BAIF FAMILY ENZYME (AFU_ORTHOLOGUE AFUA_1G05360)-RELATED"/>
    <property type="match status" value="1"/>
</dbReference>
<dbReference type="Pfam" id="PF02515">
    <property type="entry name" value="CoA_transf_3"/>
    <property type="match status" value="1"/>
</dbReference>
<dbReference type="SUPFAM" id="SSF89796">
    <property type="entry name" value="CoA-transferase family III (CaiB/BaiF)"/>
    <property type="match status" value="2"/>
</dbReference>
<comment type="function">
    <text evidence="1 2 3 4 8">Acyl-CoA transferase; part of the Fusarium detoxification of benzoxazolinone cluster 2 (FDB2) involved in the degradation of benzoxazolinones produced by the host plant (PubMed:19302487, PubMed:26808652). Maize, wheat, and rye produce the 2 benzoxazinone phytoanticipins 2,4-dihy-droxy-7-methoxy-1,4-benzoxazin-3-one (DIMBOA) and 2,4-dihydroxy-1,4-benzoxazin-3-one (DIBOA) that, due to their inherent instability once released, spontaneously degrade to the more stable corresponding benzoxazolinones, 6-methoxy-2-benzoxazolinone (MBOA) and 2-benzoxazolinone (BOA), respectively (PubMed:11876429). The first step in the detoxification of benzoxazolinones involves the hydrolysis of the cyclic ester bond of benzoxazolinones by the FDB1 cluster gamma-lactamase MBL1 to aminophenols (PubMed:12788712, PubMed:26808652). MBL1 is able to convert BOA into 2-aminophenol (2-AP), as well as MBOA into 5-methoxy-2-aminophenol (2-AMP) (PubMed:12788712, PubMed:26808652). The FDB2 cluster N-malonyltransferase FDB2/NAT1 then metabolizes aminophenols via N-malonylation to non-toxic malonamic acids (PubMed:12788712, PubMed:19302487). FDB2/NAT1 converts 2-AP into N-(2-hydroxyphenyl) malonamic acid (HPMA) and 2-AMP into N-(2-hydroxy-4-methoxyphenyl) malonamic acid (HMPMA) (PubMed:12788712, PubMed:19302487). The duplicated dienlactone hydrolases DLH1 and DLH2 may provide redundant function for hydrolyzing the lactone moiety in the BOA molecule (Probable). The roles of the amidases an other enzymes encoded by the 2 FDB clusters have not been identified so far (Probable).</text>
</comment>
<comment type="induction">
    <text evidence="4">Expression is induced in response to 2-benzoxasolinone (BOA) exposure.</text>
</comment>
<comment type="disruption phenotype">
    <text evidence="3">Does not affect tolerance to 2-benzoxazolinone (BOA).</text>
</comment>
<comment type="miscellaneous">
    <text evidence="8">Fusarium verticillioides possesses 2 unlinked loci, FDB1 and FDB2, necessary for detoxification of antimicrobial compounds produced by maize, including 2-benzoxazolinone (BOA) (Probable). The FDB2 cluster arose as a duplication of the FDB1 cluster with rearrangement and expansion by incorporating additional genes (Probable).</text>
</comment>
<comment type="similarity">
    <text evidence="6">Belongs to the CoA-transferase III family.</text>
</comment>
<accession>W7N463</accession>
<keyword id="KW-0012">Acyltransferase</keyword>
<keyword id="KW-1185">Reference proteome</keyword>
<keyword id="KW-0808">Transferase</keyword>